<evidence type="ECO:0000255" key="1">
    <source>
        <dbReference type="HAMAP-Rule" id="MF_00539"/>
    </source>
</evidence>
<evidence type="ECO:0000305" key="2"/>
<name>RL27_XANOP</name>
<accession>B2STB9</accession>
<keyword id="KW-0687">Ribonucleoprotein</keyword>
<keyword id="KW-0689">Ribosomal protein</keyword>
<reference key="1">
    <citation type="journal article" date="2008" name="BMC Genomics">
        <title>Genome sequence and rapid evolution of the rice pathogen Xanthomonas oryzae pv. oryzae PXO99A.</title>
        <authorList>
            <person name="Salzberg S.L."/>
            <person name="Sommer D.D."/>
            <person name="Schatz M.C."/>
            <person name="Phillippy A.M."/>
            <person name="Rabinowicz P.D."/>
            <person name="Tsuge S."/>
            <person name="Furutani A."/>
            <person name="Ochiai H."/>
            <person name="Delcher A.L."/>
            <person name="Kelley D."/>
            <person name="Madupu R."/>
            <person name="Puiu D."/>
            <person name="Radune D."/>
            <person name="Shumway M."/>
            <person name="Trapnell C."/>
            <person name="Aparna G."/>
            <person name="Jha G."/>
            <person name="Pandey A."/>
            <person name="Patil P.B."/>
            <person name="Ishihara H."/>
            <person name="Meyer D.F."/>
            <person name="Szurek B."/>
            <person name="Verdier V."/>
            <person name="Koebnik R."/>
            <person name="Dow J.M."/>
            <person name="Ryan R.P."/>
            <person name="Hirata H."/>
            <person name="Tsuyumu S."/>
            <person name="Won Lee S."/>
            <person name="Seo Y.-S."/>
            <person name="Sriariyanum M."/>
            <person name="Ronald P.C."/>
            <person name="Sonti R.V."/>
            <person name="Van Sluys M.-A."/>
            <person name="Leach J.E."/>
            <person name="White F.F."/>
            <person name="Bogdanove A.J."/>
        </authorList>
    </citation>
    <scope>NUCLEOTIDE SEQUENCE [LARGE SCALE GENOMIC DNA]</scope>
    <source>
        <strain>PXO99A</strain>
    </source>
</reference>
<organism>
    <name type="scientific">Xanthomonas oryzae pv. oryzae (strain PXO99A)</name>
    <dbReference type="NCBI Taxonomy" id="360094"/>
    <lineage>
        <taxon>Bacteria</taxon>
        <taxon>Pseudomonadati</taxon>
        <taxon>Pseudomonadota</taxon>
        <taxon>Gammaproteobacteria</taxon>
        <taxon>Lysobacterales</taxon>
        <taxon>Lysobacteraceae</taxon>
        <taxon>Xanthomonas</taxon>
    </lineage>
</organism>
<sequence>MAHKKGVGSSRNGRDSNPKYLGVKIFGGQAIDAGNIIVRQRGTQFHPGAGVGLGRDHTLFALVDGKVEFSVKGVKKRRTVSVVAEA</sequence>
<proteinExistence type="inferred from homology"/>
<gene>
    <name evidence="1" type="primary">rpmA</name>
    <name type="ordered locus">PXO_05534</name>
</gene>
<dbReference type="EMBL" id="CP000967">
    <property type="protein sequence ID" value="ACD58164.1"/>
    <property type="molecule type" value="Genomic_DNA"/>
</dbReference>
<dbReference type="RefSeq" id="WP_011258395.1">
    <property type="nucleotide sequence ID" value="NC_010717.2"/>
</dbReference>
<dbReference type="SMR" id="B2STB9"/>
<dbReference type="KEGG" id="xop:PXO_05534"/>
<dbReference type="eggNOG" id="COG0211">
    <property type="taxonomic scope" value="Bacteria"/>
</dbReference>
<dbReference type="HOGENOM" id="CLU_095424_4_1_6"/>
<dbReference type="Proteomes" id="UP000001740">
    <property type="component" value="Chromosome"/>
</dbReference>
<dbReference type="GO" id="GO:0022625">
    <property type="term" value="C:cytosolic large ribosomal subunit"/>
    <property type="evidence" value="ECO:0007669"/>
    <property type="project" value="TreeGrafter"/>
</dbReference>
<dbReference type="GO" id="GO:0003735">
    <property type="term" value="F:structural constituent of ribosome"/>
    <property type="evidence" value="ECO:0007669"/>
    <property type="project" value="InterPro"/>
</dbReference>
<dbReference type="GO" id="GO:0006412">
    <property type="term" value="P:translation"/>
    <property type="evidence" value="ECO:0007669"/>
    <property type="project" value="UniProtKB-UniRule"/>
</dbReference>
<dbReference type="FunFam" id="2.40.50.100:FF:000001">
    <property type="entry name" value="50S ribosomal protein L27"/>
    <property type="match status" value="1"/>
</dbReference>
<dbReference type="Gene3D" id="2.40.50.100">
    <property type="match status" value="1"/>
</dbReference>
<dbReference type="HAMAP" id="MF_00539">
    <property type="entry name" value="Ribosomal_bL27"/>
    <property type="match status" value="1"/>
</dbReference>
<dbReference type="InterPro" id="IPR001684">
    <property type="entry name" value="Ribosomal_bL27"/>
</dbReference>
<dbReference type="InterPro" id="IPR018261">
    <property type="entry name" value="Ribosomal_bL27_CS"/>
</dbReference>
<dbReference type="NCBIfam" id="TIGR00062">
    <property type="entry name" value="L27"/>
    <property type="match status" value="1"/>
</dbReference>
<dbReference type="PANTHER" id="PTHR15893:SF0">
    <property type="entry name" value="LARGE RIBOSOMAL SUBUNIT PROTEIN BL27M"/>
    <property type="match status" value="1"/>
</dbReference>
<dbReference type="PANTHER" id="PTHR15893">
    <property type="entry name" value="RIBOSOMAL PROTEIN L27"/>
    <property type="match status" value="1"/>
</dbReference>
<dbReference type="Pfam" id="PF01016">
    <property type="entry name" value="Ribosomal_L27"/>
    <property type="match status" value="1"/>
</dbReference>
<dbReference type="PRINTS" id="PR00063">
    <property type="entry name" value="RIBOSOMALL27"/>
</dbReference>
<dbReference type="SUPFAM" id="SSF110324">
    <property type="entry name" value="Ribosomal L27 protein-like"/>
    <property type="match status" value="1"/>
</dbReference>
<dbReference type="PROSITE" id="PS00831">
    <property type="entry name" value="RIBOSOMAL_L27"/>
    <property type="match status" value="1"/>
</dbReference>
<protein>
    <recommendedName>
        <fullName evidence="1">Large ribosomal subunit protein bL27</fullName>
    </recommendedName>
    <alternativeName>
        <fullName evidence="2">50S ribosomal protein L27</fullName>
    </alternativeName>
</protein>
<comment type="similarity">
    <text evidence="1">Belongs to the bacterial ribosomal protein bL27 family.</text>
</comment>
<feature type="chain" id="PRO_1000128827" description="Large ribosomal subunit protein bL27">
    <location>
        <begin position="1"/>
        <end position="86"/>
    </location>
</feature>